<gene>
    <name evidence="1" type="primary">deoB</name>
    <name type="ordered locus">Adeh_0905</name>
</gene>
<evidence type="ECO:0000255" key="1">
    <source>
        <dbReference type="HAMAP-Rule" id="MF_00740"/>
    </source>
</evidence>
<evidence type="ECO:0000256" key="2">
    <source>
        <dbReference type="SAM" id="MobiDB-lite"/>
    </source>
</evidence>
<organism>
    <name type="scientific">Anaeromyxobacter dehalogenans (strain 2CP-C)</name>
    <dbReference type="NCBI Taxonomy" id="290397"/>
    <lineage>
        <taxon>Bacteria</taxon>
        <taxon>Pseudomonadati</taxon>
        <taxon>Myxococcota</taxon>
        <taxon>Myxococcia</taxon>
        <taxon>Myxococcales</taxon>
        <taxon>Cystobacterineae</taxon>
        <taxon>Anaeromyxobacteraceae</taxon>
        <taxon>Anaeromyxobacter</taxon>
    </lineage>
</organism>
<feature type="chain" id="PRO_0000258270" description="Phosphopentomutase">
    <location>
        <begin position="1"/>
        <end position="391"/>
    </location>
</feature>
<feature type="region of interest" description="Disordered" evidence="2">
    <location>
        <begin position="61"/>
        <end position="88"/>
    </location>
</feature>
<feature type="compositionally biased region" description="Basic and acidic residues" evidence="2">
    <location>
        <begin position="76"/>
        <end position="87"/>
    </location>
</feature>
<feature type="binding site" evidence="1">
    <location>
        <position position="14"/>
    </location>
    <ligand>
        <name>Mn(2+)</name>
        <dbReference type="ChEBI" id="CHEBI:29035"/>
        <label>1</label>
    </ligand>
</feature>
<feature type="binding site" evidence="1">
    <location>
        <position position="286"/>
    </location>
    <ligand>
        <name>Mn(2+)</name>
        <dbReference type="ChEBI" id="CHEBI:29035"/>
        <label>2</label>
    </ligand>
</feature>
<feature type="binding site" evidence="1">
    <location>
        <position position="291"/>
    </location>
    <ligand>
        <name>Mn(2+)</name>
        <dbReference type="ChEBI" id="CHEBI:29035"/>
        <label>2</label>
    </ligand>
</feature>
<feature type="binding site" evidence="1">
    <location>
        <position position="327"/>
    </location>
    <ligand>
        <name>Mn(2+)</name>
        <dbReference type="ChEBI" id="CHEBI:29035"/>
        <label>1</label>
    </ligand>
</feature>
<feature type="binding site" evidence="1">
    <location>
        <position position="328"/>
    </location>
    <ligand>
        <name>Mn(2+)</name>
        <dbReference type="ChEBI" id="CHEBI:29035"/>
        <label>1</label>
    </ligand>
</feature>
<feature type="binding site" evidence="1">
    <location>
        <position position="339"/>
    </location>
    <ligand>
        <name>Mn(2+)</name>
        <dbReference type="ChEBI" id="CHEBI:29035"/>
        <label>2</label>
    </ligand>
</feature>
<keyword id="KW-0963">Cytoplasm</keyword>
<keyword id="KW-0413">Isomerase</keyword>
<keyword id="KW-0464">Manganese</keyword>
<keyword id="KW-0479">Metal-binding</keyword>
<keyword id="KW-1185">Reference proteome</keyword>
<comment type="function">
    <text evidence="1">Isomerase that catalyzes the conversion of deoxy-ribose 1-phosphate (dRib-1-P) and ribose 1-phosphate (Rib-1-P) to deoxy-ribose 5-phosphate (dRib-5-P) and ribose 5-phosphate (Rib-5-P), respectively.</text>
</comment>
<comment type="catalytic activity">
    <reaction evidence="1">
        <text>2-deoxy-alpha-D-ribose 1-phosphate = 2-deoxy-D-ribose 5-phosphate</text>
        <dbReference type="Rhea" id="RHEA:27658"/>
        <dbReference type="ChEBI" id="CHEBI:57259"/>
        <dbReference type="ChEBI" id="CHEBI:62877"/>
        <dbReference type="EC" id="5.4.2.7"/>
    </reaction>
</comment>
<comment type="catalytic activity">
    <reaction evidence="1">
        <text>alpha-D-ribose 1-phosphate = D-ribose 5-phosphate</text>
        <dbReference type="Rhea" id="RHEA:18793"/>
        <dbReference type="ChEBI" id="CHEBI:57720"/>
        <dbReference type="ChEBI" id="CHEBI:78346"/>
        <dbReference type="EC" id="5.4.2.7"/>
    </reaction>
</comment>
<comment type="cofactor">
    <cofactor evidence="1">
        <name>Mn(2+)</name>
        <dbReference type="ChEBI" id="CHEBI:29035"/>
    </cofactor>
    <text evidence="1">Binds 2 manganese ions.</text>
</comment>
<comment type="pathway">
    <text evidence="1">Carbohydrate degradation; 2-deoxy-D-ribose 1-phosphate degradation; D-glyceraldehyde 3-phosphate and acetaldehyde from 2-deoxy-alpha-D-ribose 1-phosphate: step 1/2.</text>
</comment>
<comment type="subcellular location">
    <subcellularLocation>
        <location evidence="1">Cytoplasm</location>
    </subcellularLocation>
</comment>
<comment type="similarity">
    <text evidence="1">Belongs to the phosphopentomutase family.</text>
</comment>
<accession>Q2IPF0</accession>
<name>DEOB_ANADE</name>
<dbReference type="EC" id="5.4.2.7" evidence="1"/>
<dbReference type="EMBL" id="CP000251">
    <property type="protein sequence ID" value="ABC80680.1"/>
    <property type="molecule type" value="Genomic_DNA"/>
</dbReference>
<dbReference type="RefSeq" id="WP_011419963.1">
    <property type="nucleotide sequence ID" value="NC_007760.1"/>
</dbReference>
<dbReference type="SMR" id="Q2IPF0"/>
<dbReference type="STRING" id="290397.Adeh_0905"/>
<dbReference type="KEGG" id="ade:Adeh_0905"/>
<dbReference type="eggNOG" id="COG1015">
    <property type="taxonomic scope" value="Bacteria"/>
</dbReference>
<dbReference type="HOGENOM" id="CLU_053861_0_0_7"/>
<dbReference type="OrthoDB" id="9769930at2"/>
<dbReference type="UniPathway" id="UPA00002">
    <property type="reaction ID" value="UER00467"/>
</dbReference>
<dbReference type="Proteomes" id="UP000001935">
    <property type="component" value="Chromosome"/>
</dbReference>
<dbReference type="GO" id="GO:0005829">
    <property type="term" value="C:cytosol"/>
    <property type="evidence" value="ECO:0007669"/>
    <property type="project" value="TreeGrafter"/>
</dbReference>
<dbReference type="GO" id="GO:0000287">
    <property type="term" value="F:magnesium ion binding"/>
    <property type="evidence" value="ECO:0007669"/>
    <property type="project" value="InterPro"/>
</dbReference>
<dbReference type="GO" id="GO:0030145">
    <property type="term" value="F:manganese ion binding"/>
    <property type="evidence" value="ECO:0007669"/>
    <property type="project" value="UniProtKB-UniRule"/>
</dbReference>
<dbReference type="GO" id="GO:0008973">
    <property type="term" value="F:phosphopentomutase activity"/>
    <property type="evidence" value="ECO:0007669"/>
    <property type="project" value="UniProtKB-UniRule"/>
</dbReference>
<dbReference type="GO" id="GO:0006018">
    <property type="term" value="P:2-deoxyribose 1-phosphate catabolic process"/>
    <property type="evidence" value="ECO:0007669"/>
    <property type="project" value="UniProtKB-UniRule"/>
</dbReference>
<dbReference type="GO" id="GO:0006015">
    <property type="term" value="P:5-phosphoribose 1-diphosphate biosynthetic process"/>
    <property type="evidence" value="ECO:0007669"/>
    <property type="project" value="UniProtKB-UniPathway"/>
</dbReference>
<dbReference type="GO" id="GO:0043094">
    <property type="term" value="P:metabolic compound salvage"/>
    <property type="evidence" value="ECO:0007669"/>
    <property type="project" value="InterPro"/>
</dbReference>
<dbReference type="GO" id="GO:0009117">
    <property type="term" value="P:nucleotide metabolic process"/>
    <property type="evidence" value="ECO:0007669"/>
    <property type="project" value="InterPro"/>
</dbReference>
<dbReference type="CDD" id="cd16009">
    <property type="entry name" value="PPM"/>
    <property type="match status" value="1"/>
</dbReference>
<dbReference type="Gene3D" id="3.40.720.10">
    <property type="entry name" value="Alkaline Phosphatase, subunit A"/>
    <property type="match status" value="1"/>
</dbReference>
<dbReference type="Gene3D" id="3.30.70.1250">
    <property type="entry name" value="Phosphopentomutase"/>
    <property type="match status" value="1"/>
</dbReference>
<dbReference type="HAMAP" id="MF_00740">
    <property type="entry name" value="Phosphopentomut"/>
    <property type="match status" value="1"/>
</dbReference>
<dbReference type="InterPro" id="IPR017850">
    <property type="entry name" value="Alkaline_phosphatase_core_sf"/>
</dbReference>
<dbReference type="InterPro" id="IPR010045">
    <property type="entry name" value="DeoB"/>
</dbReference>
<dbReference type="InterPro" id="IPR006124">
    <property type="entry name" value="Metalloenzyme"/>
</dbReference>
<dbReference type="InterPro" id="IPR024052">
    <property type="entry name" value="Phosphopentomutase_DeoB_cap_sf"/>
</dbReference>
<dbReference type="NCBIfam" id="TIGR01696">
    <property type="entry name" value="deoB"/>
    <property type="match status" value="1"/>
</dbReference>
<dbReference type="NCBIfam" id="NF003766">
    <property type="entry name" value="PRK05362.1"/>
    <property type="match status" value="1"/>
</dbReference>
<dbReference type="PANTHER" id="PTHR21110">
    <property type="entry name" value="PHOSPHOPENTOMUTASE"/>
    <property type="match status" value="1"/>
</dbReference>
<dbReference type="PANTHER" id="PTHR21110:SF0">
    <property type="entry name" value="PHOSPHOPENTOMUTASE"/>
    <property type="match status" value="1"/>
</dbReference>
<dbReference type="Pfam" id="PF01676">
    <property type="entry name" value="Metalloenzyme"/>
    <property type="match status" value="1"/>
</dbReference>
<dbReference type="PIRSF" id="PIRSF001491">
    <property type="entry name" value="Ppentomutase"/>
    <property type="match status" value="1"/>
</dbReference>
<dbReference type="SUPFAM" id="SSF53649">
    <property type="entry name" value="Alkaline phosphatase-like"/>
    <property type="match status" value="1"/>
</dbReference>
<dbReference type="SUPFAM" id="SSF143856">
    <property type="entry name" value="DeoB insert domain-like"/>
    <property type="match status" value="1"/>
</dbReference>
<sequence length="391" mass="41698">MSTNRRRLVILVADSAGCGALPDAAAYGDEGSDTLGNTSRAVGGLSLPVLGRMGLGHVTAIQGVPPDPAPTAFHGRMAERSEGKDTTTGHWEMMGVVLREGLRTFPRGFPPEILEAFVRETGAPGVLGNTVASGTVIIQELGEEHQRTGKPIVYTSADSVFQVAAHTDTVPLETLYAWCRTARRILDPWRVARVIARPFVGTPGSYARTYDRKDFSMPPPAPTVLERLVEAGVPVVGVGKIPDIFDRRGITEEIHTAGNADGLARTAALLDRVDRGLVFVNLVDFDMLYGHRNDPAGYARALEELDRGLPAILDRLGPGELLALTADHGCDPTTPSTDHSREHVPLIVHAPGRGGGDLGTRATFADLGATVAEYFGVRSEVGTSFLAEVTR</sequence>
<reference key="1">
    <citation type="submission" date="2006-01" db="EMBL/GenBank/DDBJ databases">
        <title>Complete sequence of Anaeromyxobacter dehalogenans 2CP-C.</title>
        <authorList>
            <person name="Copeland A."/>
            <person name="Lucas S."/>
            <person name="Lapidus A."/>
            <person name="Barry K."/>
            <person name="Detter J.C."/>
            <person name="Glavina T."/>
            <person name="Hammon N."/>
            <person name="Israni S."/>
            <person name="Pitluck S."/>
            <person name="Brettin T."/>
            <person name="Bruce D."/>
            <person name="Han C."/>
            <person name="Tapia R."/>
            <person name="Gilna P."/>
            <person name="Kiss H."/>
            <person name="Schmutz J."/>
            <person name="Larimer F."/>
            <person name="Land M."/>
            <person name="Kyrpides N."/>
            <person name="Anderson I."/>
            <person name="Sanford R.A."/>
            <person name="Ritalahti K.M."/>
            <person name="Thomas H.S."/>
            <person name="Kirby J.R."/>
            <person name="Zhulin I.B."/>
            <person name="Loeffler F.E."/>
            <person name="Richardson P."/>
        </authorList>
    </citation>
    <scope>NUCLEOTIDE SEQUENCE [LARGE SCALE GENOMIC DNA]</scope>
    <source>
        <strain>2CP-C</strain>
    </source>
</reference>
<protein>
    <recommendedName>
        <fullName evidence="1">Phosphopentomutase</fullName>
        <ecNumber evidence="1">5.4.2.7</ecNumber>
    </recommendedName>
    <alternativeName>
        <fullName evidence="1">Phosphodeoxyribomutase</fullName>
    </alternativeName>
</protein>
<proteinExistence type="inferred from homology"/>